<keyword id="KW-0165">Cleavage on pair of basic residues</keyword>
<keyword id="KW-0968">Cytoplasmic vesicle</keyword>
<keyword id="KW-1015">Disulfide bond</keyword>
<keyword id="KW-0325">Glycoprotein</keyword>
<keyword id="KW-0378">Hydrolase</keyword>
<keyword id="KW-0645">Protease</keyword>
<keyword id="KW-1185">Reference proteome</keyword>
<keyword id="KW-0964">Secreted</keyword>
<keyword id="KW-0720">Serine protease</keyword>
<keyword id="KW-0732">Signal</keyword>
<keyword id="KW-0865">Zymogen</keyword>
<sequence>MKGGCVSQWKAAAGFLFCVMVFASAERPVFTNHFLVELHKGGEDEARQVAAEHGFGVRKLPFAEGLYHFYHNGLAKAKRRRSLHHKQQLERDPRVKMALQQEGFDRKKRGYRDINEIDINMNDPLFTKQWYLINTGQADGTPGLDLNVAEAWELGYTGKGVTIGIMDDGIDYLHPDLASNYNAEASYDFSSNDPYPYPRYTDDWFNSHGTRCAGEVSAAANNNICGVGVAYNSKVAGIRMLDQPFMTDIIEASSISHMPQLIDIYSASWGPTDNGKTVDGPRELTLQAMADGVNKGRGGKGSIYVWASGDGGSYDDCNCDGYASSMWTISINSAINDGRTALYDESCSSTLASTFSNGRKRNPEAGVATTDLYGNCTLRHSGTSAAAPEAAGVFALALEANLGLTWRDMQHLTVLTSKRNQLHDEVHQWRRNGVGLEFNHLFGYGVLDAGAMVKMAKDWKTVPERFHCVGGSVQDPEKIPSTGKLVLTLTTDACEGKENFVRYLEHVQAVITVNATRRGDLNINMTSPMGTKSILLSRRPRDDDSKVGFDKWPFMTTHTWGEDARGTWTLELGFVGSAPQKGVLKEWTLMLHGTQSAPYIDQVVRDYQSKLAMSKKEELEEELDEAVERSLKSILNKN</sequence>
<accession>Q5REC2</accession>
<reference key="1">
    <citation type="submission" date="2004-11" db="EMBL/GenBank/DDBJ databases">
        <authorList>
            <consortium name="The German cDNA consortium"/>
        </authorList>
    </citation>
    <scope>NUCLEOTIDE SEQUENCE [LARGE SCALE MRNA]</scope>
    <source>
        <tissue>Brain cortex</tissue>
    </source>
</reference>
<name>NEC2_PONAB</name>
<comment type="function">
    <text evidence="1">Serine endopeptidase which is involved in the processing of hormone and other protein precursors at sites comprised of pairs of basic amino acid residues. Responsible for the release of glucagon from proglucagon in pancreatic A cells (By similarity).</text>
</comment>
<comment type="catalytic activity">
    <reaction>
        <text>Release of protein hormones and neuropeptides from their precursors, generally by hydrolysis of -Lys-Arg-|- bonds.</text>
        <dbReference type="EC" id="3.4.21.94"/>
    </reaction>
</comment>
<comment type="subcellular location">
    <subcellularLocation>
        <location evidence="1">Cytoplasmic vesicle</location>
        <location evidence="1">Secretory vesicle</location>
    </subcellularLocation>
    <subcellularLocation>
        <location evidence="1">Secreted</location>
    </subcellularLocation>
    <text evidence="1">Localized in the secretion granules.</text>
</comment>
<comment type="similarity">
    <text evidence="6">Belongs to the peptidase S8 family. Furin subfamily.</text>
</comment>
<dbReference type="EC" id="3.4.21.94"/>
<dbReference type="EMBL" id="CR857610">
    <property type="protein sequence ID" value="CAH89885.1"/>
    <property type="molecule type" value="mRNA"/>
</dbReference>
<dbReference type="RefSeq" id="NP_001124879.1">
    <property type="nucleotide sequence ID" value="NM_001131407.1"/>
</dbReference>
<dbReference type="SMR" id="Q5REC2"/>
<dbReference type="FunCoup" id="Q5REC2">
    <property type="interactions" value="454"/>
</dbReference>
<dbReference type="STRING" id="9601.ENSPPYP00000011989"/>
<dbReference type="MEROPS" id="S08.073"/>
<dbReference type="GlyCosmos" id="Q5REC2">
    <property type="glycosylation" value="3 sites, No reported glycans"/>
</dbReference>
<dbReference type="Ensembl" id="ENSPPYT00000012461.3">
    <property type="protein sequence ID" value="ENSPPYP00000011989.2"/>
    <property type="gene ID" value="ENSPPYG00000010725.3"/>
</dbReference>
<dbReference type="GeneID" id="100171744"/>
<dbReference type="KEGG" id="pon:100171744"/>
<dbReference type="CTD" id="5126"/>
<dbReference type="eggNOG" id="KOG3526">
    <property type="taxonomic scope" value="Eukaryota"/>
</dbReference>
<dbReference type="GeneTree" id="ENSGT00940000156965"/>
<dbReference type="HOGENOM" id="CLU_002976_4_4_1"/>
<dbReference type="InParanoid" id="Q5REC2"/>
<dbReference type="OMA" id="LAKQWHS"/>
<dbReference type="OrthoDB" id="300641at2759"/>
<dbReference type="TreeFam" id="TF314277"/>
<dbReference type="Proteomes" id="UP000001595">
    <property type="component" value="Chromosome 20"/>
</dbReference>
<dbReference type="GO" id="GO:0005615">
    <property type="term" value="C:extracellular space"/>
    <property type="evidence" value="ECO:0000250"/>
    <property type="project" value="UniProtKB"/>
</dbReference>
<dbReference type="GO" id="GO:0016020">
    <property type="term" value="C:membrane"/>
    <property type="evidence" value="ECO:0007669"/>
    <property type="project" value="Ensembl"/>
</dbReference>
<dbReference type="GO" id="GO:0043005">
    <property type="term" value="C:neuron projection"/>
    <property type="evidence" value="ECO:0007669"/>
    <property type="project" value="TreeGrafter"/>
</dbReference>
<dbReference type="GO" id="GO:0005654">
    <property type="term" value="C:nucleoplasm"/>
    <property type="evidence" value="ECO:0007669"/>
    <property type="project" value="Ensembl"/>
</dbReference>
<dbReference type="GO" id="GO:0030141">
    <property type="term" value="C:secretory granule"/>
    <property type="evidence" value="ECO:0007669"/>
    <property type="project" value="Ensembl"/>
</dbReference>
<dbReference type="GO" id="GO:0030133">
    <property type="term" value="C:transport vesicle"/>
    <property type="evidence" value="ECO:0007669"/>
    <property type="project" value="UniProtKB-SubCell"/>
</dbReference>
<dbReference type="GO" id="GO:0004252">
    <property type="term" value="F:serine-type endopeptidase activity"/>
    <property type="evidence" value="ECO:0007669"/>
    <property type="project" value="UniProtKB-EC"/>
</dbReference>
<dbReference type="GO" id="GO:0034230">
    <property type="term" value="P:enkephalin processing"/>
    <property type="evidence" value="ECO:0007669"/>
    <property type="project" value="Ensembl"/>
</dbReference>
<dbReference type="GO" id="GO:0030070">
    <property type="term" value="P:insulin processing"/>
    <property type="evidence" value="ECO:0007669"/>
    <property type="project" value="Ensembl"/>
</dbReference>
<dbReference type="GO" id="GO:0007399">
    <property type="term" value="P:nervous system development"/>
    <property type="evidence" value="ECO:0007669"/>
    <property type="project" value="Ensembl"/>
</dbReference>
<dbReference type="GO" id="GO:0016486">
    <property type="term" value="P:peptide hormone processing"/>
    <property type="evidence" value="ECO:0000250"/>
    <property type="project" value="UniProtKB"/>
</dbReference>
<dbReference type="GO" id="GO:0016540">
    <property type="term" value="P:protein autoprocessing"/>
    <property type="evidence" value="ECO:0007669"/>
    <property type="project" value="Ensembl"/>
</dbReference>
<dbReference type="CDD" id="cd04059">
    <property type="entry name" value="Peptidases_S8_Protein_convertases_Kexins_Furin-like"/>
    <property type="match status" value="1"/>
</dbReference>
<dbReference type="FunFam" id="2.60.120.260:FF:000020">
    <property type="entry name" value="neuroendocrine convertase 2"/>
    <property type="match status" value="1"/>
</dbReference>
<dbReference type="FunFam" id="3.30.70.850:FF:000003">
    <property type="entry name" value="neuroendocrine convertase 2 isoform X1"/>
    <property type="match status" value="1"/>
</dbReference>
<dbReference type="FunFam" id="3.40.50.200:FF:000004">
    <property type="entry name" value="Proprotein convertase type 2"/>
    <property type="match status" value="1"/>
</dbReference>
<dbReference type="Gene3D" id="2.60.120.260">
    <property type="entry name" value="Galactose-binding domain-like"/>
    <property type="match status" value="1"/>
</dbReference>
<dbReference type="Gene3D" id="3.30.70.850">
    <property type="entry name" value="Peptidase S8, pro-domain"/>
    <property type="match status" value="1"/>
</dbReference>
<dbReference type="Gene3D" id="3.40.50.200">
    <property type="entry name" value="Peptidase S8/S53 domain"/>
    <property type="match status" value="1"/>
</dbReference>
<dbReference type="InterPro" id="IPR008979">
    <property type="entry name" value="Galactose-bd-like_sf"/>
</dbReference>
<dbReference type="InterPro" id="IPR034182">
    <property type="entry name" value="Kexin/furin"/>
</dbReference>
<dbReference type="InterPro" id="IPR002884">
    <property type="entry name" value="P_dom"/>
</dbReference>
<dbReference type="InterPro" id="IPR000209">
    <property type="entry name" value="Peptidase_S8/S53_dom"/>
</dbReference>
<dbReference type="InterPro" id="IPR036852">
    <property type="entry name" value="Peptidase_S8/S53_dom_sf"/>
</dbReference>
<dbReference type="InterPro" id="IPR023827">
    <property type="entry name" value="Peptidase_S8_Asp-AS"/>
</dbReference>
<dbReference type="InterPro" id="IPR022398">
    <property type="entry name" value="Peptidase_S8_His-AS"/>
</dbReference>
<dbReference type="InterPro" id="IPR023828">
    <property type="entry name" value="Peptidase_S8_Ser-AS"/>
</dbReference>
<dbReference type="InterPro" id="IPR015500">
    <property type="entry name" value="Peptidase_S8_subtilisin-rel"/>
</dbReference>
<dbReference type="InterPro" id="IPR032815">
    <property type="entry name" value="S8_pro-domain"/>
</dbReference>
<dbReference type="InterPro" id="IPR038466">
    <property type="entry name" value="S8_pro-domain_sf"/>
</dbReference>
<dbReference type="PANTHER" id="PTHR42884:SF13">
    <property type="entry name" value="NEUROENDOCRINE CONVERTASE 2"/>
    <property type="match status" value="1"/>
</dbReference>
<dbReference type="PANTHER" id="PTHR42884">
    <property type="entry name" value="PROPROTEIN CONVERTASE SUBTILISIN/KEXIN-RELATED"/>
    <property type="match status" value="1"/>
</dbReference>
<dbReference type="Pfam" id="PF01483">
    <property type="entry name" value="P_proprotein"/>
    <property type="match status" value="1"/>
</dbReference>
<dbReference type="Pfam" id="PF00082">
    <property type="entry name" value="Peptidase_S8"/>
    <property type="match status" value="1"/>
</dbReference>
<dbReference type="Pfam" id="PF16470">
    <property type="entry name" value="S8_pro-domain"/>
    <property type="match status" value="1"/>
</dbReference>
<dbReference type="PRINTS" id="PR00723">
    <property type="entry name" value="SUBTILISIN"/>
</dbReference>
<dbReference type="SUPFAM" id="SSF49785">
    <property type="entry name" value="Galactose-binding domain-like"/>
    <property type="match status" value="1"/>
</dbReference>
<dbReference type="SUPFAM" id="SSF54897">
    <property type="entry name" value="Protease propeptides/inhibitors"/>
    <property type="match status" value="1"/>
</dbReference>
<dbReference type="SUPFAM" id="SSF52743">
    <property type="entry name" value="Subtilisin-like"/>
    <property type="match status" value="1"/>
</dbReference>
<dbReference type="PROSITE" id="PS51829">
    <property type="entry name" value="P_HOMO_B"/>
    <property type="match status" value="1"/>
</dbReference>
<dbReference type="PROSITE" id="PS51892">
    <property type="entry name" value="SUBTILASE"/>
    <property type="match status" value="1"/>
</dbReference>
<dbReference type="PROSITE" id="PS00136">
    <property type="entry name" value="SUBTILASE_ASP"/>
    <property type="match status" value="1"/>
</dbReference>
<dbReference type="PROSITE" id="PS00137">
    <property type="entry name" value="SUBTILASE_HIS"/>
    <property type="match status" value="1"/>
</dbReference>
<dbReference type="PROSITE" id="PS00138">
    <property type="entry name" value="SUBTILASE_SER"/>
    <property type="match status" value="1"/>
</dbReference>
<feature type="signal peptide" evidence="3">
    <location>
        <begin position="1"/>
        <end position="25"/>
    </location>
</feature>
<feature type="propeptide" id="PRO_0000262584" evidence="3">
    <location>
        <begin position="26"/>
        <end position="109"/>
    </location>
</feature>
<feature type="chain" id="PRO_0000262585" description="Neuroendocrine convertase 2">
    <location>
        <begin position="110"/>
        <end position="638"/>
    </location>
</feature>
<feature type="domain" description="Peptidase S8" evidence="5">
    <location>
        <begin position="129"/>
        <end position="453"/>
    </location>
</feature>
<feature type="domain" description="P/Homo B" evidence="4">
    <location>
        <begin position="461"/>
        <end position="597"/>
    </location>
</feature>
<feature type="active site" description="Charge relay system" evidence="5">
    <location>
        <position position="167"/>
    </location>
</feature>
<feature type="active site" description="Charge relay system" evidence="5">
    <location>
        <position position="208"/>
    </location>
</feature>
<feature type="active site" description="Charge relay system" evidence="5">
    <location>
        <position position="384"/>
    </location>
</feature>
<feature type="glycosylation site" description="N-linked (GlcNAc...) asparagine" evidence="3">
    <location>
        <position position="375"/>
    </location>
</feature>
<feature type="glycosylation site" description="N-linked (GlcNAc...) asparagine" evidence="3">
    <location>
        <position position="514"/>
    </location>
</feature>
<feature type="glycosylation site" description="N-linked (GlcNAc...) asparagine" evidence="3">
    <location>
        <position position="524"/>
    </location>
</feature>
<feature type="disulfide bond" evidence="2">
    <location>
        <begin position="225"/>
        <end position="376"/>
    </location>
</feature>
<feature type="disulfide bond" evidence="2">
    <location>
        <begin position="317"/>
        <end position="347"/>
    </location>
</feature>
<feature type="disulfide bond" evidence="2">
    <location>
        <begin position="468"/>
        <end position="494"/>
    </location>
</feature>
<evidence type="ECO:0000250" key="1">
    <source>
        <dbReference type="UniProtKB" id="P16519"/>
    </source>
</evidence>
<evidence type="ECO:0000250" key="2">
    <source>
        <dbReference type="UniProtKB" id="P23188"/>
    </source>
</evidence>
<evidence type="ECO:0000255" key="3"/>
<evidence type="ECO:0000255" key="4">
    <source>
        <dbReference type="PROSITE-ProRule" id="PRU01173"/>
    </source>
</evidence>
<evidence type="ECO:0000255" key="5">
    <source>
        <dbReference type="PROSITE-ProRule" id="PRU01240"/>
    </source>
</evidence>
<evidence type="ECO:0000305" key="6"/>
<protein>
    <recommendedName>
        <fullName>Neuroendocrine convertase 2</fullName>
        <shortName>NEC 2</shortName>
        <ecNumber>3.4.21.94</ecNumber>
    </recommendedName>
    <alternativeName>
        <fullName>Prohormone convertase 2</fullName>
    </alternativeName>
    <alternativeName>
        <fullName>Proprotein convertase 2</fullName>
        <shortName>PC2</shortName>
    </alternativeName>
</protein>
<proteinExistence type="evidence at transcript level"/>
<organism>
    <name type="scientific">Pongo abelii</name>
    <name type="common">Sumatran orangutan</name>
    <name type="synonym">Pongo pygmaeus abelii</name>
    <dbReference type="NCBI Taxonomy" id="9601"/>
    <lineage>
        <taxon>Eukaryota</taxon>
        <taxon>Metazoa</taxon>
        <taxon>Chordata</taxon>
        <taxon>Craniata</taxon>
        <taxon>Vertebrata</taxon>
        <taxon>Euteleostomi</taxon>
        <taxon>Mammalia</taxon>
        <taxon>Eutheria</taxon>
        <taxon>Euarchontoglires</taxon>
        <taxon>Primates</taxon>
        <taxon>Haplorrhini</taxon>
        <taxon>Catarrhini</taxon>
        <taxon>Hominidae</taxon>
        <taxon>Pongo</taxon>
    </lineage>
</organism>
<gene>
    <name type="primary">PCSK2</name>
    <name type="synonym">NEC2</name>
</gene>